<proteinExistence type="inferred from homology"/>
<organism>
    <name type="scientific">Syntrophotalea carbinolica (strain DSM 2380 / NBRC 103641 / GraBd1)</name>
    <name type="common">Pelobacter carbinolicus</name>
    <dbReference type="NCBI Taxonomy" id="338963"/>
    <lineage>
        <taxon>Bacteria</taxon>
        <taxon>Pseudomonadati</taxon>
        <taxon>Thermodesulfobacteriota</taxon>
        <taxon>Desulfuromonadia</taxon>
        <taxon>Desulfuromonadales</taxon>
        <taxon>Syntrophotaleaceae</taxon>
        <taxon>Syntrophotalea</taxon>
    </lineage>
</organism>
<feature type="chain" id="PRO_0000230052" description="Glutamate 5-kinase">
    <location>
        <begin position="1"/>
        <end position="373"/>
    </location>
</feature>
<feature type="domain" description="PUA" evidence="1">
    <location>
        <begin position="280"/>
        <end position="358"/>
    </location>
</feature>
<feature type="binding site" evidence="1">
    <location>
        <position position="15"/>
    </location>
    <ligand>
        <name>ATP</name>
        <dbReference type="ChEBI" id="CHEBI:30616"/>
    </ligand>
</feature>
<feature type="binding site" evidence="1">
    <location>
        <position position="54"/>
    </location>
    <ligand>
        <name>substrate</name>
    </ligand>
</feature>
<feature type="binding site" evidence="1">
    <location>
        <position position="141"/>
    </location>
    <ligand>
        <name>substrate</name>
    </ligand>
</feature>
<feature type="binding site" evidence="1">
    <location>
        <position position="153"/>
    </location>
    <ligand>
        <name>substrate</name>
    </ligand>
</feature>
<feature type="binding site" evidence="1">
    <location>
        <begin position="173"/>
        <end position="174"/>
    </location>
    <ligand>
        <name>ATP</name>
        <dbReference type="ChEBI" id="CHEBI:30616"/>
    </ligand>
</feature>
<feature type="binding site" evidence="1">
    <location>
        <begin position="215"/>
        <end position="221"/>
    </location>
    <ligand>
        <name>ATP</name>
        <dbReference type="ChEBI" id="CHEBI:30616"/>
    </ligand>
</feature>
<comment type="function">
    <text evidence="1">Catalyzes the transfer of a phosphate group to glutamate to form L-glutamate 5-phosphate.</text>
</comment>
<comment type="catalytic activity">
    <reaction evidence="1">
        <text>L-glutamate + ATP = L-glutamyl 5-phosphate + ADP</text>
        <dbReference type="Rhea" id="RHEA:14877"/>
        <dbReference type="ChEBI" id="CHEBI:29985"/>
        <dbReference type="ChEBI" id="CHEBI:30616"/>
        <dbReference type="ChEBI" id="CHEBI:58274"/>
        <dbReference type="ChEBI" id="CHEBI:456216"/>
        <dbReference type="EC" id="2.7.2.11"/>
    </reaction>
</comment>
<comment type="pathway">
    <text evidence="1">Amino-acid biosynthesis; L-proline biosynthesis; L-glutamate 5-semialdehyde from L-glutamate: step 1/2.</text>
</comment>
<comment type="subcellular location">
    <subcellularLocation>
        <location evidence="1">Cytoplasm</location>
    </subcellularLocation>
</comment>
<comment type="similarity">
    <text evidence="1">Belongs to the glutamate 5-kinase family.</text>
</comment>
<name>PROB_SYNC1</name>
<gene>
    <name evidence="1" type="primary">proB</name>
    <name type="ordered locus">Pcar_2580</name>
</gene>
<reference key="1">
    <citation type="submission" date="2005-10" db="EMBL/GenBank/DDBJ databases">
        <title>Complete sequence of Pelobacter carbinolicus DSM 2380.</title>
        <authorList>
            <person name="Copeland A."/>
            <person name="Lucas S."/>
            <person name="Lapidus A."/>
            <person name="Barry K."/>
            <person name="Detter J.C."/>
            <person name="Glavina T."/>
            <person name="Hammon N."/>
            <person name="Israni S."/>
            <person name="Pitluck S."/>
            <person name="Chertkov O."/>
            <person name="Schmutz J."/>
            <person name="Larimer F."/>
            <person name="Land M."/>
            <person name="Kyrpides N."/>
            <person name="Ivanova N."/>
            <person name="Richardson P."/>
        </authorList>
    </citation>
    <scope>NUCLEOTIDE SEQUENCE [LARGE SCALE GENOMIC DNA]</scope>
    <source>
        <strain>DSM 2380 / NBRC 103641 / GraBd1</strain>
    </source>
</reference>
<keyword id="KW-0028">Amino-acid biosynthesis</keyword>
<keyword id="KW-0067">ATP-binding</keyword>
<keyword id="KW-0963">Cytoplasm</keyword>
<keyword id="KW-0418">Kinase</keyword>
<keyword id="KW-0547">Nucleotide-binding</keyword>
<keyword id="KW-0641">Proline biosynthesis</keyword>
<keyword id="KW-1185">Reference proteome</keyword>
<keyword id="KW-0808">Transferase</keyword>
<accession>Q3A1D9</accession>
<evidence type="ECO:0000255" key="1">
    <source>
        <dbReference type="HAMAP-Rule" id="MF_00456"/>
    </source>
</evidence>
<protein>
    <recommendedName>
        <fullName evidence="1">Glutamate 5-kinase</fullName>
        <ecNumber evidence="1">2.7.2.11</ecNumber>
    </recommendedName>
    <alternativeName>
        <fullName evidence="1">Gamma-glutamyl kinase</fullName>
        <shortName evidence="1">GK</shortName>
    </alternativeName>
</protein>
<sequence length="373" mass="40257">MRKDLLSQVKRIVIKVGSGVIFGQDGLDLDVIGSLSRDICALLSQGYEVVLVSSGAVATGKGELGIVGRPPTIPLKQAAAAIGQSRLMRAWKDAFRPCGRCVGQILLTRDDLANRRRFLNARNTLMTLLEYGVVPVINENDTVVVEEIRFGDNDNLSALTTSLAEADLLIILSDVNGLYDSNPKTNPAARKFSVIERITEDIEQMAGGAGSVVGTGGMATKVEAAKRATLYGVGTIIVDGRQAGVLPKLMAGEELGTFFLPVPQHMTARKHWISFSKASRGKLLVDEGARRAVAEKGKSLLPSGIFSIEGKFDRGDAVRICDAEGRVFAKGIASYSRQELERIMGRNSSEIEVVLGYKYGDEVVHRDNLVVKK</sequence>
<dbReference type="EC" id="2.7.2.11" evidence="1"/>
<dbReference type="EMBL" id="CP000142">
    <property type="protein sequence ID" value="ABA89818.1"/>
    <property type="molecule type" value="Genomic_DNA"/>
</dbReference>
<dbReference type="RefSeq" id="WP_011342356.1">
    <property type="nucleotide sequence ID" value="NC_007498.2"/>
</dbReference>
<dbReference type="SMR" id="Q3A1D9"/>
<dbReference type="STRING" id="338963.Pcar_2580"/>
<dbReference type="KEGG" id="pca:Pcar_2580"/>
<dbReference type="eggNOG" id="COG0263">
    <property type="taxonomic scope" value="Bacteria"/>
</dbReference>
<dbReference type="HOGENOM" id="CLU_025400_2_0_7"/>
<dbReference type="OrthoDB" id="9804434at2"/>
<dbReference type="UniPathway" id="UPA00098">
    <property type="reaction ID" value="UER00359"/>
</dbReference>
<dbReference type="Proteomes" id="UP000002534">
    <property type="component" value="Chromosome"/>
</dbReference>
<dbReference type="GO" id="GO:0005829">
    <property type="term" value="C:cytosol"/>
    <property type="evidence" value="ECO:0007669"/>
    <property type="project" value="TreeGrafter"/>
</dbReference>
<dbReference type="GO" id="GO:0005524">
    <property type="term" value="F:ATP binding"/>
    <property type="evidence" value="ECO:0007669"/>
    <property type="project" value="UniProtKB-KW"/>
</dbReference>
<dbReference type="GO" id="GO:0004349">
    <property type="term" value="F:glutamate 5-kinase activity"/>
    <property type="evidence" value="ECO:0007669"/>
    <property type="project" value="UniProtKB-UniRule"/>
</dbReference>
<dbReference type="GO" id="GO:0003723">
    <property type="term" value="F:RNA binding"/>
    <property type="evidence" value="ECO:0007669"/>
    <property type="project" value="InterPro"/>
</dbReference>
<dbReference type="GO" id="GO:0055129">
    <property type="term" value="P:L-proline biosynthetic process"/>
    <property type="evidence" value="ECO:0007669"/>
    <property type="project" value="UniProtKB-UniRule"/>
</dbReference>
<dbReference type="CDD" id="cd04242">
    <property type="entry name" value="AAK_G5K_ProB"/>
    <property type="match status" value="1"/>
</dbReference>
<dbReference type="CDD" id="cd21157">
    <property type="entry name" value="PUA_G5K"/>
    <property type="match status" value="1"/>
</dbReference>
<dbReference type="FunFam" id="2.30.130.10:FF:000003">
    <property type="entry name" value="Glutamate 5-kinase"/>
    <property type="match status" value="1"/>
</dbReference>
<dbReference type="FunFam" id="3.40.1160.10:FF:000018">
    <property type="entry name" value="Glutamate 5-kinase"/>
    <property type="match status" value="1"/>
</dbReference>
<dbReference type="Gene3D" id="3.40.1160.10">
    <property type="entry name" value="Acetylglutamate kinase-like"/>
    <property type="match status" value="1"/>
</dbReference>
<dbReference type="Gene3D" id="2.30.130.10">
    <property type="entry name" value="PUA domain"/>
    <property type="match status" value="1"/>
</dbReference>
<dbReference type="HAMAP" id="MF_00456">
    <property type="entry name" value="ProB"/>
    <property type="match status" value="1"/>
</dbReference>
<dbReference type="InterPro" id="IPR036393">
    <property type="entry name" value="AceGlu_kinase-like_sf"/>
</dbReference>
<dbReference type="InterPro" id="IPR001048">
    <property type="entry name" value="Asp/Glu/Uridylate_kinase"/>
</dbReference>
<dbReference type="InterPro" id="IPR041739">
    <property type="entry name" value="G5K_ProB"/>
</dbReference>
<dbReference type="InterPro" id="IPR001057">
    <property type="entry name" value="Glu/AcGlu_kinase"/>
</dbReference>
<dbReference type="InterPro" id="IPR011529">
    <property type="entry name" value="Glu_5kinase"/>
</dbReference>
<dbReference type="InterPro" id="IPR005715">
    <property type="entry name" value="Glu_5kinase/COase_Synthase"/>
</dbReference>
<dbReference type="InterPro" id="IPR019797">
    <property type="entry name" value="Glutamate_5-kinase_CS"/>
</dbReference>
<dbReference type="InterPro" id="IPR002478">
    <property type="entry name" value="PUA"/>
</dbReference>
<dbReference type="InterPro" id="IPR015947">
    <property type="entry name" value="PUA-like_sf"/>
</dbReference>
<dbReference type="InterPro" id="IPR036974">
    <property type="entry name" value="PUA_sf"/>
</dbReference>
<dbReference type="NCBIfam" id="TIGR01027">
    <property type="entry name" value="proB"/>
    <property type="match status" value="1"/>
</dbReference>
<dbReference type="PANTHER" id="PTHR43654">
    <property type="entry name" value="GLUTAMATE 5-KINASE"/>
    <property type="match status" value="1"/>
</dbReference>
<dbReference type="PANTHER" id="PTHR43654:SF1">
    <property type="entry name" value="ISOPENTENYL PHOSPHATE KINASE"/>
    <property type="match status" value="1"/>
</dbReference>
<dbReference type="Pfam" id="PF00696">
    <property type="entry name" value="AA_kinase"/>
    <property type="match status" value="1"/>
</dbReference>
<dbReference type="Pfam" id="PF01472">
    <property type="entry name" value="PUA"/>
    <property type="match status" value="1"/>
</dbReference>
<dbReference type="PIRSF" id="PIRSF000729">
    <property type="entry name" value="GK"/>
    <property type="match status" value="1"/>
</dbReference>
<dbReference type="PRINTS" id="PR00474">
    <property type="entry name" value="GLU5KINASE"/>
</dbReference>
<dbReference type="SMART" id="SM00359">
    <property type="entry name" value="PUA"/>
    <property type="match status" value="1"/>
</dbReference>
<dbReference type="SUPFAM" id="SSF53633">
    <property type="entry name" value="Carbamate kinase-like"/>
    <property type="match status" value="1"/>
</dbReference>
<dbReference type="SUPFAM" id="SSF88697">
    <property type="entry name" value="PUA domain-like"/>
    <property type="match status" value="1"/>
</dbReference>
<dbReference type="PROSITE" id="PS00902">
    <property type="entry name" value="GLUTAMATE_5_KINASE"/>
    <property type="match status" value="1"/>
</dbReference>
<dbReference type="PROSITE" id="PS50890">
    <property type="entry name" value="PUA"/>
    <property type="match status" value="1"/>
</dbReference>